<protein>
    <recommendedName>
        <fullName evidence="1">Enolase</fullName>
        <ecNumber evidence="1">4.2.1.11</ecNumber>
    </recommendedName>
    <alternativeName>
        <fullName evidence="1">2-phospho-D-glycerate hydro-lyase</fullName>
    </alternativeName>
    <alternativeName>
        <fullName evidence="1">2-phosphoglycerate dehydratase</fullName>
    </alternativeName>
</protein>
<sequence>MSEIQSVIAREVIDSRGNPTVEAEVTTLSGTGRAAVPSGASTGEHEAVELRDGDKKRFLGKGVLTAVKNIETVLGPAVLGMDALDQAELDKVLIQADGSPNKSKLGANAILAVSMAAARAAADTVDLPLWRYLGGAAARVLPTPLMNILNGGVHADNGLEIQEFMIVPYGAESFAEALRTGAEIFHTLRGLLKKDGMVTAVGDEGGFAPRLPSNRAALEYVVRAIEAAGHRPGEDVGVALDSALSEFYDAKTERYTFDKQQKTREEIVAIYDELAKAFPIVSIEDGVAENDEKGWRLLTERLGKKVQLVGDDLFVTNPARLAKGIEDGLANAILIKLNQIGTVTETLECIRQAAEGGYRSIISHRSGETEDTFIADLAVATNAGQIKTGSASRSDRVAKYNQLLRISYALGDGQVFAGRAPFRRPGAKRSS</sequence>
<reference key="1">
    <citation type="journal article" date="2007" name="Nat. Biotechnol.">
        <title>Complete genome sequence of the myxobacterium Sorangium cellulosum.</title>
        <authorList>
            <person name="Schneiker S."/>
            <person name="Perlova O."/>
            <person name="Kaiser O."/>
            <person name="Gerth K."/>
            <person name="Alici A."/>
            <person name="Altmeyer M.O."/>
            <person name="Bartels D."/>
            <person name="Bekel T."/>
            <person name="Beyer S."/>
            <person name="Bode E."/>
            <person name="Bode H.B."/>
            <person name="Bolten C.J."/>
            <person name="Choudhuri J.V."/>
            <person name="Doss S."/>
            <person name="Elnakady Y.A."/>
            <person name="Frank B."/>
            <person name="Gaigalat L."/>
            <person name="Goesmann A."/>
            <person name="Groeger C."/>
            <person name="Gross F."/>
            <person name="Jelsbak L."/>
            <person name="Jelsbak L."/>
            <person name="Kalinowski J."/>
            <person name="Kegler C."/>
            <person name="Knauber T."/>
            <person name="Konietzny S."/>
            <person name="Kopp M."/>
            <person name="Krause L."/>
            <person name="Krug D."/>
            <person name="Linke B."/>
            <person name="Mahmud T."/>
            <person name="Martinez-Arias R."/>
            <person name="McHardy A.C."/>
            <person name="Merai M."/>
            <person name="Meyer F."/>
            <person name="Mormann S."/>
            <person name="Munoz-Dorado J."/>
            <person name="Perez J."/>
            <person name="Pradella S."/>
            <person name="Rachid S."/>
            <person name="Raddatz G."/>
            <person name="Rosenau F."/>
            <person name="Rueckert C."/>
            <person name="Sasse F."/>
            <person name="Scharfe M."/>
            <person name="Schuster S.C."/>
            <person name="Suen G."/>
            <person name="Treuner-Lange A."/>
            <person name="Velicer G.J."/>
            <person name="Vorholter F.-J."/>
            <person name="Weissman K.J."/>
            <person name="Welch R.D."/>
            <person name="Wenzel S.C."/>
            <person name="Whitworth D.E."/>
            <person name="Wilhelm S."/>
            <person name="Wittmann C."/>
            <person name="Bloecker H."/>
            <person name="Puehler A."/>
            <person name="Mueller R."/>
        </authorList>
    </citation>
    <scope>NUCLEOTIDE SEQUENCE [LARGE SCALE GENOMIC DNA]</scope>
    <source>
        <strain>So ce56</strain>
    </source>
</reference>
<gene>
    <name evidence="1" type="primary">eno</name>
    <name type="ordered locus">sce7698</name>
</gene>
<comment type="function">
    <text evidence="1">Catalyzes the reversible conversion of 2-phosphoglycerate (2-PG) into phosphoenolpyruvate (PEP). It is essential for the degradation of carbohydrates via glycolysis.</text>
</comment>
<comment type="catalytic activity">
    <reaction evidence="1">
        <text>(2R)-2-phosphoglycerate = phosphoenolpyruvate + H2O</text>
        <dbReference type="Rhea" id="RHEA:10164"/>
        <dbReference type="ChEBI" id="CHEBI:15377"/>
        <dbReference type="ChEBI" id="CHEBI:58289"/>
        <dbReference type="ChEBI" id="CHEBI:58702"/>
        <dbReference type="EC" id="4.2.1.11"/>
    </reaction>
</comment>
<comment type="cofactor">
    <cofactor evidence="1">
        <name>Mg(2+)</name>
        <dbReference type="ChEBI" id="CHEBI:18420"/>
    </cofactor>
    <text evidence="1">Binds a second Mg(2+) ion via substrate during catalysis.</text>
</comment>
<comment type="pathway">
    <text evidence="1">Carbohydrate degradation; glycolysis; pyruvate from D-glyceraldehyde 3-phosphate: step 4/5.</text>
</comment>
<comment type="subcellular location">
    <subcellularLocation>
        <location evidence="1">Cytoplasm</location>
    </subcellularLocation>
    <subcellularLocation>
        <location evidence="1">Secreted</location>
    </subcellularLocation>
    <subcellularLocation>
        <location evidence="1">Cell surface</location>
    </subcellularLocation>
    <text evidence="1">Fractions of enolase are present in both the cytoplasm and on the cell surface.</text>
</comment>
<comment type="similarity">
    <text evidence="1">Belongs to the enolase family.</text>
</comment>
<evidence type="ECO:0000255" key="1">
    <source>
        <dbReference type="HAMAP-Rule" id="MF_00318"/>
    </source>
</evidence>
<feature type="chain" id="PRO_1000079154" description="Enolase">
    <location>
        <begin position="1"/>
        <end position="431"/>
    </location>
</feature>
<feature type="active site" description="Proton donor" evidence="1">
    <location>
        <position position="204"/>
    </location>
</feature>
<feature type="active site" description="Proton acceptor" evidence="1">
    <location>
        <position position="336"/>
    </location>
</feature>
<feature type="binding site" evidence="1">
    <location>
        <position position="162"/>
    </location>
    <ligand>
        <name>(2R)-2-phosphoglycerate</name>
        <dbReference type="ChEBI" id="CHEBI:58289"/>
    </ligand>
</feature>
<feature type="binding site" evidence="1">
    <location>
        <position position="241"/>
    </location>
    <ligand>
        <name>Mg(2+)</name>
        <dbReference type="ChEBI" id="CHEBI:18420"/>
    </ligand>
</feature>
<feature type="binding site" evidence="1">
    <location>
        <position position="284"/>
    </location>
    <ligand>
        <name>Mg(2+)</name>
        <dbReference type="ChEBI" id="CHEBI:18420"/>
    </ligand>
</feature>
<feature type="binding site" evidence="1">
    <location>
        <position position="311"/>
    </location>
    <ligand>
        <name>Mg(2+)</name>
        <dbReference type="ChEBI" id="CHEBI:18420"/>
    </ligand>
</feature>
<feature type="binding site" evidence="1">
    <location>
        <position position="336"/>
    </location>
    <ligand>
        <name>(2R)-2-phosphoglycerate</name>
        <dbReference type="ChEBI" id="CHEBI:58289"/>
    </ligand>
</feature>
<feature type="binding site" evidence="1">
    <location>
        <position position="365"/>
    </location>
    <ligand>
        <name>(2R)-2-phosphoglycerate</name>
        <dbReference type="ChEBI" id="CHEBI:58289"/>
    </ligand>
</feature>
<feature type="binding site" evidence="1">
    <location>
        <position position="366"/>
    </location>
    <ligand>
        <name>(2R)-2-phosphoglycerate</name>
        <dbReference type="ChEBI" id="CHEBI:58289"/>
    </ligand>
</feature>
<feature type="binding site" evidence="1">
    <location>
        <position position="387"/>
    </location>
    <ligand>
        <name>(2R)-2-phosphoglycerate</name>
        <dbReference type="ChEBI" id="CHEBI:58289"/>
    </ligand>
</feature>
<accession>A9FA52</accession>
<dbReference type="EC" id="4.2.1.11" evidence="1"/>
<dbReference type="EMBL" id="AM746676">
    <property type="protein sequence ID" value="CAN97867.1"/>
    <property type="molecule type" value="Genomic_DNA"/>
</dbReference>
<dbReference type="RefSeq" id="WP_012240306.1">
    <property type="nucleotide sequence ID" value="NC_010162.1"/>
</dbReference>
<dbReference type="SMR" id="A9FA52"/>
<dbReference type="STRING" id="448385.sce7698"/>
<dbReference type="KEGG" id="scl:sce7698"/>
<dbReference type="eggNOG" id="COG0148">
    <property type="taxonomic scope" value="Bacteria"/>
</dbReference>
<dbReference type="HOGENOM" id="CLU_031223_2_1_7"/>
<dbReference type="OrthoDB" id="9804716at2"/>
<dbReference type="BioCyc" id="SCEL448385:SCE_RS39430-MONOMER"/>
<dbReference type="UniPathway" id="UPA00109">
    <property type="reaction ID" value="UER00187"/>
</dbReference>
<dbReference type="Proteomes" id="UP000002139">
    <property type="component" value="Chromosome"/>
</dbReference>
<dbReference type="GO" id="GO:0009986">
    <property type="term" value="C:cell surface"/>
    <property type="evidence" value="ECO:0007669"/>
    <property type="project" value="UniProtKB-SubCell"/>
</dbReference>
<dbReference type="GO" id="GO:0005576">
    <property type="term" value="C:extracellular region"/>
    <property type="evidence" value="ECO:0007669"/>
    <property type="project" value="UniProtKB-SubCell"/>
</dbReference>
<dbReference type="GO" id="GO:0000015">
    <property type="term" value="C:phosphopyruvate hydratase complex"/>
    <property type="evidence" value="ECO:0007669"/>
    <property type="project" value="InterPro"/>
</dbReference>
<dbReference type="GO" id="GO:0000287">
    <property type="term" value="F:magnesium ion binding"/>
    <property type="evidence" value="ECO:0007669"/>
    <property type="project" value="UniProtKB-UniRule"/>
</dbReference>
<dbReference type="GO" id="GO:0004634">
    <property type="term" value="F:phosphopyruvate hydratase activity"/>
    <property type="evidence" value="ECO:0007669"/>
    <property type="project" value="UniProtKB-UniRule"/>
</dbReference>
<dbReference type="GO" id="GO:0006096">
    <property type="term" value="P:glycolytic process"/>
    <property type="evidence" value="ECO:0007669"/>
    <property type="project" value="UniProtKB-UniRule"/>
</dbReference>
<dbReference type="CDD" id="cd03313">
    <property type="entry name" value="enolase"/>
    <property type="match status" value="1"/>
</dbReference>
<dbReference type="FunFam" id="3.30.390.10:FF:000001">
    <property type="entry name" value="Enolase"/>
    <property type="match status" value="1"/>
</dbReference>
<dbReference type="Gene3D" id="3.20.20.120">
    <property type="entry name" value="Enolase-like C-terminal domain"/>
    <property type="match status" value="1"/>
</dbReference>
<dbReference type="Gene3D" id="3.30.390.10">
    <property type="entry name" value="Enolase-like, N-terminal domain"/>
    <property type="match status" value="1"/>
</dbReference>
<dbReference type="HAMAP" id="MF_00318">
    <property type="entry name" value="Enolase"/>
    <property type="match status" value="1"/>
</dbReference>
<dbReference type="InterPro" id="IPR000941">
    <property type="entry name" value="Enolase"/>
</dbReference>
<dbReference type="InterPro" id="IPR036849">
    <property type="entry name" value="Enolase-like_C_sf"/>
</dbReference>
<dbReference type="InterPro" id="IPR029017">
    <property type="entry name" value="Enolase-like_N"/>
</dbReference>
<dbReference type="InterPro" id="IPR020810">
    <property type="entry name" value="Enolase_C"/>
</dbReference>
<dbReference type="InterPro" id="IPR020809">
    <property type="entry name" value="Enolase_CS"/>
</dbReference>
<dbReference type="InterPro" id="IPR020811">
    <property type="entry name" value="Enolase_N"/>
</dbReference>
<dbReference type="NCBIfam" id="TIGR01060">
    <property type="entry name" value="eno"/>
    <property type="match status" value="1"/>
</dbReference>
<dbReference type="PANTHER" id="PTHR11902">
    <property type="entry name" value="ENOLASE"/>
    <property type="match status" value="1"/>
</dbReference>
<dbReference type="PANTHER" id="PTHR11902:SF1">
    <property type="entry name" value="ENOLASE"/>
    <property type="match status" value="1"/>
</dbReference>
<dbReference type="Pfam" id="PF00113">
    <property type="entry name" value="Enolase_C"/>
    <property type="match status" value="1"/>
</dbReference>
<dbReference type="Pfam" id="PF03952">
    <property type="entry name" value="Enolase_N"/>
    <property type="match status" value="1"/>
</dbReference>
<dbReference type="PIRSF" id="PIRSF001400">
    <property type="entry name" value="Enolase"/>
    <property type="match status" value="1"/>
</dbReference>
<dbReference type="PRINTS" id="PR00148">
    <property type="entry name" value="ENOLASE"/>
</dbReference>
<dbReference type="SFLD" id="SFLDF00002">
    <property type="entry name" value="enolase"/>
    <property type="match status" value="1"/>
</dbReference>
<dbReference type="SFLD" id="SFLDG00178">
    <property type="entry name" value="enolase"/>
    <property type="match status" value="1"/>
</dbReference>
<dbReference type="SMART" id="SM01192">
    <property type="entry name" value="Enolase_C"/>
    <property type="match status" value="1"/>
</dbReference>
<dbReference type="SMART" id="SM01193">
    <property type="entry name" value="Enolase_N"/>
    <property type="match status" value="1"/>
</dbReference>
<dbReference type="SUPFAM" id="SSF51604">
    <property type="entry name" value="Enolase C-terminal domain-like"/>
    <property type="match status" value="1"/>
</dbReference>
<dbReference type="SUPFAM" id="SSF54826">
    <property type="entry name" value="Enolase N-terminal domain-like"/>
    <property type="match status" value="1"/>
</dbReference>
<dbReference type="PROSITE" id="PS00164">
    <property type="entry name" value="ENOLASE"/>
    <property type="match status" value="1"/>
</dbReference>
<proteinExistence type="inferred from homology"/>
<organism>
    <name type="scientific">Sorangium cellulosum (strain So ce56)</name>
    <name type="common">Polyangium cellulosum (strain So ce56)</name>
    <dbReference type="NCBI Taxonomy" id="448385"/>
    <lineage>
        <taxon>Bacteria</taxon>
        <taxon>Pseudomonadati</taxon>
        <taxon>Myxococcota</taxon>
        <taxon>Polyangia</taxon>
        <taxon>Polyangiales</taxon>
        <taxon>Polyangiaceae</taxon>
        <taxon>Sorangium</taxon>
    </lineage>
</organism>
<keyword id="KW-0963">Cytoplasm</keyword>
<keyword id="KW-0324">Glycolysis</keyword>
<keyword id="KW-0456">Lyase</keyword>
<keyword id="KW-0460">Magnesium</keyword>
<keyword id="KW-0479">Metal-binding</keyword>
<keyword id="KW-1185">Reference proteome</keyword>
<keyword id="KW-0964">Secreted</keyword>
<name>ENO_SORC5</name>